<accession>Q6G8Y9</accession>
<organism>
    <name type="scientific">Staphylococcus aureus (strain MSSA476)</name>
    <dbReference type="NCBI Taxonomy" id="282459"/>
    <lineage>
        <taxon>Bacteria</taxon>
        <taxon>Bacillati</taxon>
        <taxon>Bacillota</taxon>
        <taxon>Bacilli</taxon>
        <taxon>Bacillales</taxon>
        <taxon>Staphylococcaceae</taxon>
        <taxon>Staphylococcus</taxon>
    </lineage>
</organism>
<name>PRMA_STAAS</name>
<gene>
    <name evidence="1" type="primary">prmA</name>
    <name type="ordered locus">SAS1516</name>
</gene>
<feature type="chain" id="PRO_0000192306" description="Ribosomal protein L11 methyltransferase">
    <location>
        <begin position="1"/>
        <end position="312"/>
    </location>
</feature>
<feature type="binding site" evidence="1">
    <location>
        <position position="160"/>
    </location>
    <ligand>
        <name>S-adenosyl-L-methionine</name>
        <dbReference type="ChEBI" id="CHEBI:59789"/>
    </ligand>
</feature>
<feature type="binding site" evidence="1">
    <location>
        <position position="181"/>
    </location>
    <ligand>
        <name>S-adenosyl-L-methionine</name>
        <dbReference type="ChEBI" id="CHEBI:59789"/>
    </ligand>
</feature>
<feature type="binding site" evidence="1">
    <location>
        <position position="203"/>
    </location>
    <ligand>
        <name>S-adenosyl-L-methionine</name>
        <dbReference type="ChEBI" id="CHEBI:59789"/>
    </ligand>
</feature>
<feature type="binding site" evidence="1">
    <location>
        <position position="246"/>
    </location>
    <ligand>
        <name>S-adenosyl-L-methionine</name>
        <dbReference type="ChEBI" id="CHEBI:59789"/>
    </ligand>
</feature>
<sequence length="312" mass="35513">MNWTELSIIINHEAVELATNILENHGSNGVVIEDSDDLINQPEDKYGEIYALKKEDYPDKGVRLKAYFNEMTYDDKLRQQIKDELLNLDELDQHNVQFSEQIIAETDWENEWKNYFHPFRASKKFTIVPSWETYAKEADEELCIELDPGMAFGTGDHPTTSMCLKAIETYVLPQHSVIDVGTGSGILSIASHLIGVKRIKALDIDEMAVSVAKENFRRNHCETLIEAVPGNLLKDETEKFDIVIANILAHIIDEMIEDAYNTLNEGGYFITSGIIKEKYEGIQSHMERVGFKIISEQHDNGWVCLVGQKVSE</sequence>
<comment type="function">
    <text evidence="1">Methylates ribosomal protein L11.</text>
</comment>
<comment type="catalytic activity">
    <reaction evidence="1">
        <text>L-lysyl-[protein] + 3 S-adenosyl-L-methionine = N(6),N(6),N(6)-trimethyl-L-lysyl-[protein] + 3 S-adenosyl-L-homocysteine + 3 H(+)</text>
        <dbReference type="Rhea" id="RHEA:54192"/>
        <dbReference type="Rhea" id="RHEA-COMP:9752"/>
        <dbReference type="Rhea" id="RHEA-COMP:13826"/>
        <dbReference type="ChEBI" id="CHEBI:15378"/>
        <dbReference type="ChEBI" id="CHEBI:29969"/>
        <dbReference type="ChEBI" id="CHEBI:57856"/>
        <dbReference type="ChEBI" id="CHEBI:59789"/>
        <dbReference type="ChEBI" id="CHEBI:61961"/>
    </reaction>
</comment>
<comment type="subcellular location">
    <subcellularLocation>
        <location evidence="1">Cytoplasm</location>
    </subcellularLocation>
</comment>
<comment type="similarity">
    <text evidence="1">Belongs to the methyltransferase superfamily. PrmA family.</text>
</comment>
<keyword id="KW-0963">Cytoplasm</keyword>
<keyword id="KW-0489">Methyltransferase</keyword>
<keyword id="KW-0949">S-adenosyl-L-methionine</keyword>
<keyword id="KW-0808">Transferase</keyword>
<evidence type="ECO:0000255" key="1">
    <source>
        <dbReference type="HAMAP-Rule" id="MF_00735"/>
    </source>
</evidence>
<protein>
    <recommendedName>
        <fullName evidence="1">Ribosomal protein L11 methyltransferase</fullName>
        <shortName evidence="1">L11 Mtase</shortName>
        <ecNumber evidence="1">2.1.1.-</ecNumber>
    </recommendedName>
</protein>
<reference key="1">
    <citation type="journal article" date="2004" name="Proc. Natl. Acad. Sci. U.S.A.">
        <title>Complete genomes of two clinical Staphylococcus aureus strains: evidence for the rapid evolution of virulence and drug resistance.</title>
        <authorList>
            <person name="Holden M.T.G."/>
            <person name="Feil E.J."/>
            <person name="Lindsay J.A."/>
            <person name="Peacock S.J."/>
            <person name="Day N.P.J."/>
            <person name="Enright M.C."/>
            <person name="Foster T.J."/>
            <person name="Moore C.E."/>
            <person name="Hurst L."/>
            <person name="Atkin R."/>
            <person name="Barron A."/>
            <person name="Bason N."/>
            <person name="Bentley S.D."/>
            <person name="Chillingworth C."/>
            <person name="Chillingworth T."/>
            <person name="Churcher C."/>
            <person name="Clark L."/>
            <person name="Corton C."/>
            <person name="Cronin A."/>
            <person name="Doggett J."/>
            <person name="Dowd L."/>
            <person name="Feltwell T."/>
            <person name="Hance Z."/>
            <person name="Harris B."/>
            <person name="Hauser H."/>
            <person name="Holroyd S."/>
            <person name="Jagels K."/>
            <person name="James K.D."/>
            <person name="Lennard N."/>
            <person name="Line A."/>
            <person name="Mayes R."/>
            <person name="Moule S."/>
            <person name="Mungall K."/>
            <person name="Ormond D."/>
            <person name="Quail M.A."/>
            <person name="Rabbinowitsch E."/>
            <person name="Rutherford K.M."/>
            <person name="Sanders M."/>
            <person name="Sharp S."/>
            <person name="Simmonds M."/>
            <person name="Stevens K."/>
            <person name="Whitehead S."/>
            <person name="Barrell B.G."/>
            <person name="Spratt B.G."/>
            <person name="Parkhill J."/>
        </authorList>
    </citation>
    <scope>NUCLEOTIDE SEQUENCE [LARGE SCALE GENOMIC DNA]</scope>
    <source>
        <strain>MSSA476</strain>
    </source>
</reference>
<proteinExistence type="inferred from homology"/>
<dbReference type="EC" id="2.1.1.-" evidence="1"/>
<dbReference type="EMBL" id="BX571857">
    <property type="protein sequence ID" value="CAG43317.1"/>
    <property type="molecule type" value="Genomic_DNA"/>
</dbReference>
<dbReference type="RefSeq" id="WP_001104611.1">
    <property type="nucleotide sequence ID" value="NC_002953.3"/>
</dbReference>
<dbReference type="SMR" id="Q6G8Y9"/>
<dbReference type="KEGG" id="sas:SAS1516"/>
<dbReference type="HOGENOM" id="CLU_049382_0_1_9"/>
<dbReference type="GO" id="GO:0005737">
    <property type="term" value="C:cytoplasm"/>
    <property type="evidence" value="ECO:0007669"/>
    <property type="project" value="UniProtKB-SubCell"/>
</dbReference>
<dbReference type="GO" id="GO:0016279">
    <property type="term" value="F:protein-lysine N-methyltransferase activity"/>
    <property type="evidence" value="ECO:0007669"/>
    <property type="project" value="RHEA"/>
</dbReference>
<dbReference type="GO" id="GO:0032259">
    <property type="term" value="P:methylation"/>
    <property type="evidence" value="ECO:0007669"/>
    <property type="project" value="UniProtKB-KW"/>
</dbReference>
<dbReference type="CDD" id="cd02440">
    <property type="entry name" value="AdoMet_MTases"/>
    <property type="match status" value="1"/>
</dbReference>
<dbReference type="Gene3D" id="3.40.50.150">
    <property type="entry name" value="Vaccinia Virus protein VP39"/>
    <property type="match status" value="1"/>
</dbReference>
<dbReference type="HAMAP" id="MF_00735">
    <property type="entry name" value="Methyltr_PrmA"/>
    <property type="match status" value="1"/>
</dbReference>
<dbReference type="InterPro" id="IPR050078">
    <property type="entry name" value="Ribosomal_L11_MeTrfase_PrmA"/>
</dbReference>
<dbReference type="InterPro" id="IPR004498">
    <property type="entry name" value="Ribosomal_PrmA_MeTrfase"/>
</dbReference>
<dbReference type="InterPro" id="IPR029063">
    <property type="entry name" value="SAM-dependent_MTases_sf"/>
</dbReference>
<dbReference type="NCBIfam" id="TIGR00406">
    <property type="entry name" value="prmA"/>
    <property type="match status" value="1"/>
</dbReference>
<dbReference type="PANTHER" id="PTHR43648">
    <property type="entry name" value="ELECTRON TRANSFER FLAVOPROTEIN BETA SUBUNIT LYSINE METHYLTRANSFERASE"/>
    <property type="match status" value="1"/>
</dbReference>
<dbReference type="PANTHER" id="PTHR43648:SF1">
    <property type="entry name" value="ELECTRON TRANSFER FLAVOPROTEIN BETA SUBUNIT LYSINE METHYLTRANSFERASE"/>
    <property type="match status" value="1"/>
</dbReference>
<dbReference type="Pfam" id="PF06325">
    <property type="entry name" value="PrmA"/>
    <property type="match status" value="1"/>
</dbReference>
<dbReference type="PIRSF" id="PIRSF000401">
    <property type="entry name" value="RPL11_MTase"/>
    <property type="match status" value="1"/>
</dbReference>
<dbReference type="SUPFAM" id="SSF53335">
    <property type="entry name" value="S-adenosyl-L-methionine-dependent methyltransferases"/>
    <property type="match status" value="1"/>
</dbReference>